<proteinExistence type="evidence at protein level"/>
<reference key="1">
    <citation type="journal article" date="2002" name="Nature">
        <title>The genome sequence of Schizosaccharomyces pombe.</title>
        <authorList>
            <person name="Wood V."/>
            <person name="Gwilliam R."/>
            <person name="Rajandream M.A."/>
            <person name="Lyne M.H."/>
            <person name="Lyne R."/>
            <person name="Stewart A."/>
            <person name="Sgouros J.G."/>
            <person name="Peat N."/>
            <person name="Hayles J."/>
            <person name="Baker S.G."/>
            <person name="Basham D."/>
            <person name="Bowman S."/>
            <person name="Brooks K."/>
            <person name="Brown D."/>
            <person name="Brown S."/>
            <person name="Chillingworth T."/>
            <person name="Churcher C.M."/>
            <person name="Collins M."/>
            <person name="Connor R."/>
            <person name="Cronin A."/>
            <person name="Davis P."/>
            <person name="Feltwell T."/>
            <person name="Fraser A."/>
            <person name="Gentles S."/>
            <person name="Goble A."/>
            <person name="Hamlin N."/>
            <person name="Harris D.E."/>
            <person name="Hidalgo J."/>
            <person name="Hodgson G."/>
            <person name="Holroyd S."/>
            <person name="Hornsby T."/>
            <person name="Howarth S."/>
            <person name="Huckle E.J."/>
            <person name="Hunt S."/>
            <person name="Jagels K."/>
            <person name="James K.D."/>
            <person name="Jones L."/>
            <person name="Jones M."/>
            <person name="Leather S."/>
            <person name="McDonald S."/>
            <person name="McLean J."/>
            <person name="Mooney P."/>
            <person name="Moule S."/>
            <person name="Mungall K.L."/>
            <person name="Murphy L.D."/>
            <person name="Niblett D."/>
            <person name="Odell C."/>
            <person name="Oliver K."/>
            <person name="O'Neil S."/>
            <person name="Pearson D."/>
            <person name="Quail M.A."/>
            <person name="Rabbinowitsch E."/>
            <person name="Rutherford K.M."/>
            <person name="Rutter S."/>
            <person name="Saunders D."/>
            <person name="Seeger K."/>
            <person name="Sharp S."/>
            <person name="Skelton J."/>
            <person name="Simmonds M.N."/>
            <person name="Squares R."/>
            <person name="Squares S."/>
            <person name="Stevens K."/>
            <person name="Taylor K."/>
            <person name="Taylor R.G."/>
            <person name="Tivey A."/>
            <person name="Walsh S.V."/>
            <person name="Warren T."/>
            <person name="Whitehead S."/>
            <person name="Woodward J.R."/>
            <person name="Volckaert G."/>
            <person name="Aert R."/>
            <person name="Robben J."/>
            <person name="Grymonprez B."/>
            <person name="Weltjens I."/>
            <person name="Vanstreels E."/>
            <person name="Rieger M."/>
            <person name="Schaefer M."/>
            <person name="Mueller-Auer S."/>
            <person name="Gabel C."/>
            <person name="Fuchs M."/>
            <person name="Duesterhoeft A."/>
            <person name="Fritzc C."/>
            <person name="Holzer E."/>
            <person name="Moestl D."/>
            <person name="Hilbert H."/>
            <person name="Borzym K."/>
            <person name="Langer I."/>
            <person name="Beck A."/>
            <person name="Lehrach H."/>
            <person name="Reinhardt R."/>
            <person name="Pohl T.M."/>
            <person name="Eger P."/>
            <person name="Zimmermann W."/>
            <person name="Wedler H."/>
            <person name="Wambutt R."/>
            <person name="Purnelle B."/>
            <person name="Goffeau A."/>
            <person name="Cadieu E."/>
            <person name="Dreano S."/>
            <person name="Gloux S."/>
            <person name="Lelaure V."/>
            <person name="Mottier S."/>
            <person name="Galibert F."/>
            <person name="Aves S.J."/>
            <person name="Xiang Z."/>
            <person name="Hunt C."/>
            <person name="Moore K."/>
            <person name="Hurst S.M."/>
            <person name="Lucas M."/>
            <person name="Rochet M."/>
            <person name="Gaillardin C."/>
            <person name="Tallada V.A."/>
            <person name="Garzon A."/>
            <person name="Thode G."/>
            <person name="Daga R.R."/>
            <person name="Cruzado L."/>
            <person name="Jimenez J."/>
            <person name="Sanchez M."/>
            <person name="del Rey F."/>
            <person name="Benito J."/>
            <person name="Dominguez A."/>
            <person name="Revuelta J.L."/>
            <person name="Moreno S."/>
            <person name="Armstrong J."/>
            <person name="Forsburg S.L."/>
            <person name="Cerutti L."/>
            <person name="Lowe T."/>
            <person name="McCombie W.R."/>
            <person name="Paulsen I."/>
            <person name="Potashkin J."/>
            <person name="Shpakovski G.V."/>
            <person name="Ussery D."/>
            <person name="Barrell B.G."/>
            <person name="Nurse P."/>
        </authorList>
    </citation>
    <scope>NUCLEOTIDE SEQUENCE [LARGE SCALE GENOMIC DNA]</scope>
    <source>
        <strain>972 / ATCC 24843</strain>
    </source>
</reference>
<reference key="2">
    <citation type="journal article" date="2005" name="Eukaryot. Cell">
        <title>Systematic deletion analysis of fission yeast protein kinases.</title>
        <authorList>
            <person name="Bimbo A."/>
            <person name="Jia Y."/>
            <person name="Poh S.L."/>
            <person name="Karuturi R.K.M."/>
            <person name="den Elzen N."/>
            <person name="Peng X."/>
            <person name="Zheng L."/>
            <person name="O'Connell M."/>
            <person name="Liu E.T."/>
            <person name="Balasubramanian M.K."/>
            <person name="Liu J."/>
        </authorList>
    </citation>
    <scope>IDENTIFICATION</scope>
</reference>
<reference key="3">
    <citation type="journal article" date="2006" name="Nat. Biotechnol.">
        <title>ORFeome cloning and global analysis of protein localization in the fission yeast Schizosaccharomyces pombe.</title>
        <authorList>
            <person name="Matsuyama A."/>
            <person name="Arai R."/>
            <person name="Yashiroda Y."/>
            <person name="Shirai A."/>
            <person name="Kamata A."/>
            <person name="Sekido S."/>
            <person name="Kobayashi Y."/>
            <person name="Hashimoto A."/>
            <person name="Hamamoto M."/>
            <person name="Hiraoka Y."/>
            <person name="Horinouchi S."/>
            <person name="Yoshida M."/>
        </authorList>
    </citation>
    <scope>SUBCELLULAR LOCATION [LARGE SCALE ANALYSIS]</scope>
</reference>
<reference key="4">
    <citation type="journal article" date="2008" name="J. Proteome Res.">
        <title>Phosphoproteome analysis of fission yeast.</title>
        <authorList>
            <person name="Wilson-Grady J.T."/>
            <person name="Villen J."/>
            <person name="Gygi S.P."/>
        </authorList>
    </citation>
    <scope>PHOSPHORYLATION [LARGE SCALE ANALYSIS] AT SER-154; THR-339; SER-341 AND TYR-348</scope>
    <scope>IDENTIFICATION BY MASS SPECTROMETRY</scope>
</reference>
<protein>
    <recommendedName>
        <fullName>Serine/threonine-protein kinase ppk22</fullName>
        <ecNumber>2.7.11.1</ecNumber>
    </recommendedName>
</protein>
<evidence type="ECO:0000255" key="1">
    <source>
        <dbReference type="PROSITE-ProRule" id="PRU00159"/>
    </source>
</evidence>
<evidence type="ECO:0000255" key="2">
    <source>
        <dbReference type="PROSITE-ProRule" id="PRU00618"/>
    </source>
</evidence>
<evidence type="ECO:0000255" key="3">
    <source>
        <dbReference type="PROSITE-ProRule" id="PRU10027"/>
    </source>
</evidence>
<evidence type="ECO:0000256" key="4">
    <source>
        <dbReference type="SAM" id="MobiDB-lite"/>
    </source>
</evidence>
<evidence type="ECO:0000269" key="5">
    <source>
    </source>
</evidence>
<evidence type="ECO:0000269" key="6">
    <source>
    </source>
</evidence>
<evidence type="ECO:0000305" key="7"/>
<dbReference type="EC" id="2.7.11.1"/>
<dbReference type="EMBL" id="CU329671">
    <property type="protein sequence ID" value="CAB52745.1"/>
    <property type="molecule type" value="Genomic_DNA"/>
</dbReference>
<dbReference type="PIR" id="T39748">
    <property type="entry name" value="T39748"/>
</dbReference>
<dbReference type="RefSeq" id="NP_596726.1">
    <property type="nucleotide sequence ID" value="NM_001022651.2"/>
</dbReference>
<dbReference type="SMR" id="Q9USX7"/>
<dbReference type="BioGRID" id="277322">
    <property type="interactions" value="1"/>
</dbReference>
<dbReference type="FunCoup" id="Q9USX7">
    <property type="interactions" value="173"/>
</dbReference>
<dbReference type="STRING" id="284812.Q9USX7"/>
<dbReference type="iPTMnet" id="Q9USX7"/>
<dbReference type="PaxDb" id="4896-SPBC1861.09.1"/>
<dbReference type="EnsemblFungi" id="SPBC1861.09.1">
    <property type="protein sequence ID" value="SPBC1861.09.1:pep"/>
    <property type="gene ID" value="SPBC1861.09"/>
</dbReference>
<dbReference type="GeneID" id="2540803"/>
<dbReference type="KEGG" id="spo:2540803"/>
<dbReference type="PomBase" id="SPBC1861.09">
    <property type="gene designation" value="ppk22"/>
</dbReference>
<dbReference type="VEuPathDB" id="FungiDB:SPBC1861.09"/>
<dbReference type="eggNOG" id="KOG0610">
    <property type="taxonomic scope" value="Eukaryota"/>
</dbReference>
<dbReference type="HOGENOM" id="CLU_000288_84_4_1"/>
<dbReference type="InParanoid" id="Q9USX7"/>
<dbReference type="OMA" id="PDSHEGI"/>
<dbReference type="PhylomeDB" id="Q9USX7"/>
<dbReference type="PRO" id="PR:Q9USX7"/>
<dbReference type="Proteomes" id="UP000002485">
    <property type="component" value="Chromosome II"/>
</dbReference>
<dbReference type="GO" id="GO:0005737">
    <property type="term" value="C:cytoplasm"/>
    <property type="evidence" value="ECO:0007005"/>
    <property type="project" value="PomBase"/>
</dbReference>
<dbReference type="GO" id="GO:0005829">
    <property type="term" value="C:cytosol"/>
    <property type="evidence" value="ECO:0007005"/>
    <property type="project" value="PomBase"/>
</dbReference>
<dbReference type="GO" id="GO:0005634">
    <property type="term" value="C:nucleus"/>
    <property type="evidence" value="ECO:0000318"/>
    <property type="project" value="GO_Central"/>
</dbReference>
<dbReference type="GO" id="GO:0005886">
    <property type="term" value="C:plasma membrane"/>
    <property type="evidence" value="ECO:0000318"/>
    <property type="project" value="GO_Central"/>
</dbReference>
<dbReference type="GO" id="GO:0005524">
    <property type="term" value="F:ATP binding"/>
    <property type="evidence" value="ECO:0000255"/>
    <property type="project" value="PomBase"/>
</dbReference>
<dbReference type="GO" id="GO:0106310">
    <property type="term" value="F:protein serine kinase activity"/>
    <property type="evidence" value="ECO:0007669"/>
    <property type="project" value="RHEA"/>
</dbReference>
<dbReference type="GO" id="GO:0004674">
    <property type="term" value="F:protein serine/threonine kinase activity"/>
    <property type="evidence" value="ECO:0000318"/>
    <property type="project" value="GO_Central"/>
</dbReference>
<dbReference type="GO" id="GO:0045332">
    <property type="term" value="P:phospholipid translocation"/>
    <property type="evidence" value="ECO:0000318"/>
    <property type="project" value="GO_Central"/>
</dbReference>
<dbReference type="GO" id="GO:0000749">
    <property type="term" value="P:response to pheromone triggering conjugation with cellular fusion"/>
    <property type="evidence" value="ECO:0000266"/>
    <property type="project" value="PomBase"/>
</dbReference>
<dbReference type="GO" id="GO:0023052">
    <property type="term" value="P:signaling"/>
    <property type="evidence" value="ECO:0000303"/>
    <property type="project" value="PomBase"/>
</dbReference>
<dbReference type="CDD" id="cd05574">
    <property type="entry name" value="STKc_phototropin_like"/>
    <property type="match status" value="1"/>
</dbReference>
<dbReference type="FunFam" id="3.30.200.20:FF:000524">
    <property type="entry name" value="Non-specific serine/threonine protein kinase"/>
    <property type="match status" value="1"/>
</dbReference>
<dbReference type="FunFam" id="1.10.510.10:FF:000121">
    <property type="entry name" value="Serine/threonine-protein kinase nrc-2"/>
    <property type="match status" value="1"/>
</dbReference>
<dbReference type="Gene3D" id="3.30.200.20">
    <property type="entry name" value="Phosphorylase Kinase, domain 1"/>
    <property type="match status" value="1"/>
</dbReference>
<dbReference type="Gene3D" id="1.10.510.10">
    <property type="entry name" value="Transferase(Phosphotransferase) domain 1"/>
    <property type="match status" value="1"/>
</dbReference>
<dbReference type="InterPro" id="IPR000961">
    <property type="entry name" value="AGC-kinase_C"/>
</dbReference>
<dbReference type="InterPro" id="IPR011009">
    <property type="entry name" value="Kinase-like_dom_sf"/>
</dbReference>
<dbReference type="InterPro" id="IPR000719">
    <property type="entry name" value="Prot_kinase_dom"/>
</dbReference>
<dbReference type="InterPro" id="IPR008271">
    <property type="entry name" value="Ser/Thr_kinase_AS"/>
</dbReference>
<dbReference type="PANTHER" id="PTHR45637">
    <property type="entry name" value="FLIPPASE KINASE 1-RELATED"/>
    <property type="match status" value="1"/>
</dbReference>
<dbReference type="Pfam" id="PF00069">
    <property type="entry name" value="Pkinase"/>
    <property type="match status" value="1"/>
</dbReference>
<dbReference type="SMART" id="SM00220">
    <property type="entry name" value="S_TKc"/>
    <property type="match status" value="1"/>
</dbReference>
<dbReference type="SUPFAM" id="SSF56112">
    <property type="entry name" value="Protein kinase-like (PK-like)"/>
    <property type="match status" value="1"/>
</dbReference>
<dbReference type="PROSITE" id="PS51285">
    <property type="entry name" value="AGC_KINASE_CTER"/>
    <property type="match status" value="1"/>
</dbReference>
<dbReference type="PROSITE" id="PS50011">
    <property type="entry name" value="PROTEIN_KINASE_DOM"/>
    <property type="match status" value="1"/>
</dbReference>
<dbReference type="PROSITE" id="PS00108">
    <property type="entry name" value="PROTEIN_KINASE_ST"/>
    <property type="match status" value="1"/>
</dbReference>
<feature type="chain" id="PRO_0000256821" description="Serine/threonine-protein kinase ppk22">
    <location>
        <begin position="1"/>
        <end position="526"/>
    </location>
</feature>
<feature type="domain" description="Protein kinase" evidence="1">
    <location>
        <begin position="155"/>
        <end position="445"/>
    </location>
</feature>
<feature type="domain" description="AGC-kinase C-terminal" evidence="2">
    <location>
        <begin position="446"/>
        <end position="526"/>
    </location>
</feature>
<feature type="region of interest" description="Disordered" evidence="4">
    <location>
        <begin position="1"/>
        <end position="24"/>
    </location>
</feature>
<feature type="region of interest" description="Disordered" evidence="4">
    <location>
        <begin position="39"/>
        <end position="106"/>
    </location>
</feature>
<feature type="region of interest" description="Disordered" evidence="4">
    <location>
        <begin position="499"/>
        <end position="526"/>
    </location>
</feature>
<feature type="compositionally biased region" description="Polar residues" evidence="4">
    <location>
        <begin position="10"/>
        <end position="23"/>
    </location>
</feature>
<feature type="compositionally biased region" description="Low complexity" evidence="4">
    <location>
        <begin position="65"/>
        <end position="78"/>
    </location>
</feature>
<feature type="compositionally biased region" description="Polar residues" evidence="4">
    <location>
        <begin position="500"/>
        <end position="519"/>
    </location>
</feature>
<feature type="active site" description="Proton acceptor" evidence="1 3">
    <location>
        <position position="280"/>
    </location>
</feature>
<feature type="binding site" evidence="1">
    <location>
        <begin position="161"/>
        <end position="169"/>
    </location>
    <ligand>
        <name>ATP</name>
        <dbReference type="ChEBI" id="CHEBI:30616"/>
    </ligand>
</feature>
<feature type="binding site" evidence="1">
    <location>
        <position position="184"/>
    </location>
    <ligand>
        <name>ATP</name>
        <dbReference type="ChEBI" id="CHEBI:30616"/>
    </ligand>
</feature>
<feature type="modified residue" description="Phosphoserine" evidence="6">
    <location>
        <position position="154"/>
    </location>
</feature>
<feature type="modified residue" description="Phosphothreonine" evidence="6">
    <location>
        <position position="339"/>
    </location>
</feature>
<feature type="modified residue" description="Phosphoserine" evidence="6">
    <location>
        <position position="341"/>
    </location>
</feature>
<feature type="modified residue" description="Phosphotyrosine" evidence="6">
    <location>
        <position position="348"/>
    </location>
</feature>
<comment type="catalytic activity">
    <reaction>
        <text>L-seryl-[protein] + ATP = O-phospho-L-seryl-[protein] + ADP + H(+)</text>
        <dbReference type="Rhea" id="RHEA:17989"/>
        <dbReference type="Rhea" id="RHEA-COMP:9863"/>
        <dbReference type="Rhea" id="RHEA-COMP:11604"/>
        <dbReference type="ChEBI" id="CHEBI:15378"/>
        <dbReference type="ChEBI" id="CHEBI:29999"/>
        <dbReference type="ChEBI" id="CHEBI:30616"/>
        <dbReference type="ChEBI" id="CHEBI:83421"/>
        <dbReference type="ChEBI" id="CHEBI:456216"/>
        <dbReference type="EC" id="2.7.11.1"/>
    </reaction>
</comment>
<comment type="catalytic activity">
    <reaction>
        <text>L-threonyl-[protein] + ATP = O-phospho-L-threonyl-[protein] + ADP + H(+)</text>
        <dbReference type="Rhea" id="RHEA:46608"/>
        <dbReference type="Rhea" id="RHEA-COMP:11060"/>
        <dbReference type="Rhea" id="RHEA-COMP:11605"/>
        <dbReference type="ChEBI" id="CHEBI:15378"/>
        <dbReference type="ChEBI" id="CHEBI:30013"/>
        <dbReference type="ChEBI" id="CHEBI:30616"/>
        <dbReference type="ChEBI" id="CHEBI:61977"/>
        <dbReference type="ChEBI" id="CHEBI:456216"/>
        <dbReference type="EC" id="2.7.11.1"/>
    </reaction>
</comment>
<comment type="subcellular location">
    <subcellularLocation>
        <location evidence="5">Cytoplasm</location>
    </subcellularLocation>
</comment>
<comment type="similarity">
    <text evidence="7">Belongs to the protein kinase superfamily. AGC Ser/Thr protein kinase family.</text>
</comment>
<accession>Q9USX7</accession>
<sequence>MARETEFNDKSPSSTDDGMSQSHFSDKLKNLFHFRRNRAATVSTSVRNDQRDNDSDDSTFDINVNQLNELDLNDSSDQLDSRPSLRRVSSAPDSHKGVEAPPPRPLINMSNIRKAQVKILKNPGNYIFGRTEYGKRTYSGNSTKISRVEVTPHSFEKIRLLGQGDVGKVYLVRQKSNHRLFAMKILNKREMIKRHKVNRVLAEQEILTKSKHPFIVTLYHSFQSRDYLYLCMEYCAGGEFFRALHSLPKHILPEKDACFYAAEVTAALEYLHLMGFIYRDLKPENILLHQSGHIMLSDFDLSKPISIVTHPTVVLPKHSTFSQEKPALDTNSYFSNFRTNSFVGTEEYIAPEVIRSCGHTVAVDWWTLGIFIYEILYGTTPFKGKNRHATFSNILYSDVSFPEYHGAPNVSSTCKSLIRRLLVKDESKRCGSVAGASDIKQHPFFRHIQWALLRSMKPPIIPKIEDGMEAVEPSDNDNEEEDFLNSQYLISANLPAVDMHSSTPVNEQSNPFDSFSSVTLHHAGDE</sequence>
<organism>
    <name type="scientific">Schizosaccharomyces pombe (strain 972 / ATCC 24843)</name>
    <name type="common">Fission yeast</name>
    <dbReference type="NCBI Taxonomy" id="284812"/>
    <lineage>
        <taxon>Eukaryota</taxon>
        <taxon>Fungi</taxon>
        <taxon>Dikarya</taxon>
        <taxon>Ascomycota</taxon>
        <taxon>Taphrinomycotina</taxon>
        <taxon>Schizosaccharomycetes</taxon>
        <taxon>Schizosaccharomycetales</taxon>
        <taxon>Schizosaccharomycetaceae</taxon>
        <taxon>Schizosaccharomyces</taxon>
    </lineage>
</organism>
<gene>
    <name type="primary">ppk22</name>
    <name type="ORF">SPBC1861.09</name>
</gene>
<name>PPK22_SCHPO</name>
<keyword id="KW-0067">ATP-binding</keyword>
<keyword id="KW-0963">Cytoplasm</keyword>
<keyword id="KW-0418">Kinase</keyword>
<keyword id="KW-0547">Nucleotide-binding</keyword>
<keyword id="KW-0597">Phosphoprotein</keyword>
<keyword id="KW-1185">Reference proteome</keyword>
<keyword id="KW-0723">Serine/threonine-protein kinase</keyword>
<keyword id="KW-0808">Transferase</keyword>